<dbReference type="EMBL" id="CP001657">
    <property type="protein sequence ID" value="ACT11614.1"/>
    <property type="molecule type" value="Genomic_DNA"/>
</dbReference>
<dbReference type="RefSeq" id="WP_012773263.1">
    <property type="nucleotide sequence ID" value="NC_012917.1"/>
</dbReference>
<dbReference type="SMR" id="C6DKH7"/>
<dbReference type="STRING" id="561230.PC1_0559"/>
<dbReference type="GeneID" id="67795606"/>
<dbReference type="KEGG" id="pct:PC1_0559"/>
<dbReference type="eggNOG" id="COG0211">
    <property type="taxonomic scope" value="Bacteria"/>
</dbReference>
<dbReference type="HOGENOM" id="CLU_095424_4_1_6"/>
<dbReference type="OrthoDB" id="9803474at2"/>
<dbReference type="Proteomes" id="UP000002736">
    <property type="component" value="Chromosome"/>
</dbReference>
<dbReference type="GO" id="GO:0022625">
    <property type="term" value="C:cytosolic large ribosomal subunit"/>
    <property type="evidence" value="ECO:0007669"/>
    <property type="project" value="TreeGrafter"/>
</dbReference>
<dbReference type="GO" id="GO:0003735">
    <property type="term" value="F:structural constituent of ribosome"/>
    <property type="evidence" value="ECO:0007669"/>
    <property type="project" value="InterPro"/>
</dbReference>
<dbReference type="GO" id="GO:0006412">
    <property type="term" value="P:translation"/>
    <property type="evidence" value="ECO:0007669"/>
    <property type="project" value="UniProtKB-UniRule"/>
</dbReference>
<dbReference type="FunFam" id="2.40.50.100:FF:000001">
    <property type="entry name" value="50S ribosomal protein L27"/>
    <property type="match status" value="1"/>
</dbReference>
<dbReference type="Gene3D" id="2.40.50.100">
    <property type="match status" value="1"/>
</dbReference>
<dbReference type="HAMAP" id="MF_00539">
    <property type="entry name" value="Ribosomal_bL27"/>
    <property type="match status" value="1"/>
</dbReference>
<dbReference type="InterPro" id="IPR001684">
    <property type="entry name" value="Ribosomal_bL27"/>
</dbReference>
<dbReference type="InterPro" id="IPR018261">
    <property type="entry name" value="Ribosomal_bL27_CS"/>
</dbReference>
<dbReference type="NCBIfam" id="TIGR00062">
    <property type="entry name" value="L27"/>
    <property type="match status" value="1"/>
</dbReference>
<dbReference type="PANTHER" id="PTHR15893:SF0">
    <property type="entry name" value="LARGE RIBOSOMAL SUBUNIT PROTEIN BL27M"/>
    <property type="match status" value="1"/>
</dbReference>
<dbReference type="PANTHER" id="PTHR15893">
    <property type="entry name" value="RIBOSOMAL PROTEIN L27"/>
    <property type="match status" value="1"/>
</dbReference>
<dbReference type="Pfam" id="PF01016">
    <property type="entry name" value="Ribosomal_L27"/>
    <property type="match status" value="1"/>
</dbReference>
<dbReference type="PRINTS" id="PR00063">
    <property type="entry name" value="RIBOSOMALL27"/>
</dbReference>
<dbReference type="SUPFAM" id="SSF110324">
    <property type="entry name" value="Ribosomal L27 protein-like"/>
    <property type="match status" value="1"/>
</dbReference>
<dbReference type="PROSITE" id="PS00831">
    <property type="entry name" value="RIBOSOMAL_L27"/>
    <property type="match status" value="1"/>
</dbReference>
<evidence type="ECO:0000255" key="1">
    <source>
        <dbReference type="HAMAP-Rule" id="MF_00539"/>
    </source>
</evidence>
<evidence type="ECO:0000256" key="2">
    <source>
        <dbReference type="SAM" id="MobiDB-lite"/>
    </source>
</evidence>
<evidence type="ECO:0000305" key="3"/>
<feature type="chain" id="PRO_1000211936" description="Large ribosomal subunit protein bL27">
    <location>
        <begin position="1"/>
        <end position="85"/>
    </location>
</feature>
<feature type="region of interest" description="Disordered" evidence="2">
    <location>
        <begin position="1"/>
        <end position="21"/>
    </location>
</feature>
<feature type="compositionally biased region" description="Polar residues" evidence="2">
    <location>
        <begin position="9"/>
        <end position="19"/>
    </location>
</feature>
<sequence>MAHKKAGGSTRNGRDSNAQRLGVKRFGGESVLAGNIIVRQRGTKFHAGTNVGCGKDHTLFALTDGKVQFEVKGPKNRKYISIVAE</sequence>
<organism>
    <name type="scientific">Pectobacterium carotovorum subsp. carotovorum (strain PC1)</name>
    <dbReference type="NCBI Taxonomy" id="561230"/>
    <lineage>
        <taxon>Bacteria</taxon>
        <taxon>Pseudomonadati</taxon>
        <taxon>Pseudomonadota</taxon>
        <taxon>Gammaproteobacteria</taxon>
        <taxon>Enterobacterales</taxon>
        <taxon>Pectobacteriaceae</taxon>
        <taxon>Pectobacterium</taxon>
    </lineage>
</organism>
<gene>
    <name evidence="1" type="primary">rpmA</name>
    <name type="ordered locus">PC1_0559</name>
</gene>
<accession>C6DKH7</accession>
<proteinExistence type="inferred from homology"/>
<comment type="similarity">
    <text evidence="1">Belongs to the bacterial ribosomal protein bL27 family.</text>
</comment>
<reference key="1">
    <citation type="submission" date="2009-07" db="EMBL/GenBank/DDBJ databases">
        <title>Complete sequence of Pectobacterium carotovorum subsp. carotovorum PC1.</title>
        <authorList>
            <consortium name="US DOE Joint Genome Institute"/>
            <person name="Lucas S."/>
            <person name="Copeland A."/>
            <person name="Lapidus A."/>
            <person name="Glavina del Rio T."/>
            <person name="Tice H."/>
            <person name="Bruce D."/>
            <person name="Goodwin L."/>
            <person name="Pitluck S."/>
            <person name="Munk A.C."/>
            <person name="Brettin T."/>
            <person name="Detter J.C."/>
            <person name="Han C."/>
            <person name="Tapia R."/>
            <person name="Larimer F."/>
            <person name="Land M."/>
            <person name="Hauser L."/>
            <person name="Kyrpides N."/>
            <person name="Mikhailova N."/>
            <person name="Balakrishnan V."/>
            <person name="Glasner J."/>
            <person name="Perna N.T."/>
        </authorList>
    </citation>
    <scope>NUCLEOTIDE SEQUENCE [LARGE SCALE GENOMIC DNA]</scope>
    <source>
        <strain>PC1</strain>
    </source>
</reference>
<protein>
    <recommendedName>
        <fullName evidence="1">Large ribosomal subunit protein bL27</fullName>
    </recommendedName>
    <alternativeName>
        <fullName evidence="3">50S ribosomal protein L27</fullName>
    </alternativeName>
</protein>
<name>RL27_PECCP</name>
<keyword id="KW-0687">Ribonucleoprotein</keyword>
<keyword id="KW-0689">Ribosomal protein</keyword>